<reference key="1">
    <citation type="submission" date="2008-05" db="EMBL/GenBank/DDBJ databases">
        <title>Complete sequence of Shigella boydii serotype 18 strain BS512.</title>
        <authorList>
            <person name="Rasko D.A."/>
            <person name="Rosovitz M."/>
            <person name="Maurelli A.T."/>
            <person name="Myers G."/>
            <person name="Seshadri R."/>
            <person name="Cer R."/>
            <person name="Jiang L."/>
            <person name="Ravel J."/>
            <person name="Sebastian Y."/>
        </authorList>
    </citation>
    <scope>NUCLEOTIDE SEQUENCE [LARGE SCALE GENOMIC DNA]</scope>
    <source>
        <strain>CDC 3083-94 / BS512</strain>
    </source>
</reference>
<feature type="chain" id="PRO_1000139696" description="N-acetylmannosamine kinase">
    <location>
        <begin position="1"/>
        <end position="291"/>
    </location>
</feature>
<feature type="binding site" evidence="1">
    <location>
        <begin position="5"/>
        <end position="12"/>
    </location>
    <ligand>
        <name>ATP</name>
        <dbReference type="ChEBI" id="CHEBI:30616"/>
    </ligand>
</feature>
<feature type="binding site" evidence="1">
    <location>
        <begin position="132"/>
        <end position="139"/>
    </location>
    <ligand>
        <name>ATP</name>
        <dbReference type="ChEBI" id="CHEBI:30616"/>
    </ligand>
</feature>
<feature type="binding site" evidence="1">
    <location>
        <position position="156"/>
    </location>
    <ligand>
        <name>Zn(2+)</name>
        <dbReference type="ChEBI" id="CHEBI:29105"/>
    </ligand>
</feature>
<feature type="binding site" evidence="1">
    <location>
        <position position="166"/>
    </location>
    <ligand>
        <name>Zn(2+)</name>
        <dbReference type="ChEBI" id="CHEBI:29105"/>
    </ligand>
</feature>
<feature type="binding site" evidence="1">
    <location>
        <position position="168"/>
    </location>
    <ligand>
        <name>Zn(2+)</name>
        <dbReference type="ChEBI" id="CHEBI:29105"/>
    </ligand>
</feature>
<feature type="binding site" evidence="1">
    <location>
        <position position="173"/>
    </location>
    <ligand>
        <name>Zn(2+)</name>
        <dbReference type="ChEBI" id="CHEBI:29105"/>
    </ligand>
</feature>
<evidence type="ECO:0000255" key="1">
    <source>
        <dbReference type="HAMAP-Rule" id="MF_01234"/>
    </source>
</evidence>
<keyword id="KW-0067">ATP-binding</keyword>
<keyword id="KW-0119">Carbohydrate metabolism</keyword>
<keyword id="KW-0418">Kinase</keyword>
<keyword id="KW-0479">Metal-binding</keyword>
<keyword id="KW-0547">Nucleotide-binding</keyword>
<keyword id="KW-1185">Reference proteome</keyword>
<keyword id="KW-0808">Transferase</keyword>
<keyword id="KW-0862">Zinc</keyword>
<accession>B2U1W2</accession>
<dbReference type="EC" id="2.7.1.60" evidence="1"/>
<dbReference type="EMBL" id="CP001063">
    <property type="protein sequence ID" value="ACD07365.1"/>
    <property type="molecule type" value="Genomic_DNA"/>
</dbReference>
<dbReference type="RefSeq" id="WP_000209049.1">
    <property type="nucleotide sequence ID" value="NC_010658.1"/>
</dbReference>
<dbReference type="SMR" id="B2U1W2"/>
<dbReference type="STRING" id="344609.SbBS512_E3554"/>
<dbReference type="KEGG" id="sbc:SbBS512_E3554"/>
<dbReference type="HOGENOM" id="CLU_036604_0_4_6"/>
<dbReference type="UniPathway" id="UPA00629">
    <property type="reaction ID" value="UER00681"/>
</dbReference>
<dbReference type="Proteomes" id="UP000001030">
    <property type="component" value="Chromosome"/>
</dbReference>
<dbReference type="GO" id="GO:0005524">
    <property type="term" value="F:ATP binding"/>
    <property type="evidence" value="ECO:0007669"/>
    <property type="project" value="UniProtKB-UniRule"/>
</dbReference>
<dbReference type="GO" id="GO:0009384">
    <property type="term" value="F:N-acylmannosamine kinase activity"/>
    <property type="evidence" value="ECO:0007669"/>
    <property type="project" value="UniProtKB-UniRule"/>
</dbReference>
<dbReference type="GO" id="GO:0008270">
    <property type="term" value="F:zinc ion binding"/>
    <property type="evidence" value="ECO:0007669"/>
    <property type="project" value="UniProtKB-UniRule"/>
</dbReference>
<dbReference type="GO" id="GO:0019262">
    <property type="term" value="P:N-acetylneuraminate catabolic process"/>
    <property type="evidence" value="ECO:0007669"/>
    <property type="project" value="UniProtKB-UniRule"/>
</dbReference>
<dbReference type="CDD" id="cd24069">
    <property type="entry name" value="ASKHA_NBD_ROK_EcNanK-like"/>
    <property type="match status" value="1"/>
</dbReference>
<dbReference type="FunFam" id="3.30.420.40:FF:000062">
    <property type="entry name" value="N-acetylmannosamine kinase"/>
    <property type="match status" value="1"/>
</dbReference>
<dbReference type="FunFam" id="3.30.420.40:FF:000063">
    <property type="entry name" value="N-acetylmannosamine kinase"/>
    <property type="match status" value="1"/>
</dbReference>
<dbReference type="Gene3D" id="3.30.420.40">
    <property type="match status" value="2"/>
</dbReference>
<dbReference type="HAMAP" id="MF_01234">
    <property type="entry name" value="ManNAc_kinase"/>
    <property type="match status" value="1"/>
</dbReference>
<dbReference type="InterPro" id="IPR043129">
    <property type="entry name" value="ATPase_NBD"/>
</dbReference>
<dbReference type="InterPro" id="IPR023945">
    <property type="entry name" value="ManNAc_kinase_bac"/>
</dbReference>
<dbReference type="InterPro" id="IPR000600">
    <property type="entry name" value="ROK"/>
</dbReference>
<dbReference type="InterPro" id="IPR049874">
    <property type="entry name" value="ROK_cs"/>
</dbReference>
<dbReference type="NCBIfam" id="NF047821">
    <property type="entry name" value="NactlManKinNanK"/>
    <property type="match status" value="1"/>
</dbReference>
<dbReference type="NCBIfam" id="NF003461">
    <property type="entry name" value="PRK05082.1"/>
    <property type="match status" value="1"/>
</dbReference>
<dbReference type="PANTHER" id="PTHR18964:SF169">
    <property type="entry name" value="N-ACETYLMANNOSAMINE KINASE"/>
    <property type="match status" value="1"/>
</dbReference>
<dbReference type="PANTHER" id="PTHR18964">
    <property type="entry name" value="ROK (REPRESSOR, ORF, KINASE) FAMILY"/>
    <property type="match status" value="1"/>
</dbReference>
<dbReference type="Pfam" id="PF00480">
    <property type="entry name" value="ROK"/>
    <property type="match status" value="1"/>
</dbReference>
<dbReference type="SUPFAM" id="SSF53067">
    <property type="entry name" value="Actin-like ATPase domain"/>
    <property type="match status" value="1"/>
</dbReference>
<dbReference type="PROSITE" id="PS01125">
    <property type="entry name" value="ROK"/>
    <property type="match status" value="1"/>
</dbReference>
<gene>
    <name evidence="1" type="primary">nanK</name>
    <name type="ordered locus">SbBS512_E3554</name>
</gene>
<organism>
    <name type="scientific">Shigella boydii serotype 18 (strain CDC 3083-94 / BS512)</name>
    <dbReference type="NCBI Taxonomy" id="344609"/>
    <lineage>
        <taxon>Bacteria</taxon>
        <taxon>Pseudomonadati</taxon>
        <taxon>Pseudomonadota</taxon>
        <taxon>Gammaproteobacteria</taxon>
        <taxon>Enterobacterales</taxon>
        <taxon>Enterobacteriaceae</taxon>
        <taxon>Shigella</taxon>
    </lineage>
</organism>
<protein>
    <recommendedName>
        <fullName evidence="1">N-acetylmannosamine kinase</fullName>
        <ecNumber evidence="1">2.7.1.60</ecNumber>
    </recommendedName>
    <alternativeName>
        <fullName evidence="1">ManNAc kinase</fullName>
    </alternativeName>
    <alternativeName>
        <fullName evidence="1">N-acetyl-D-mannosamine kinase</fullName>
    </alternativeName>
</protein>
<comment type="function">
    <text evidence="1">Catalyzes the phosphorylation of N-acetylmannosamine (ManNAc) to ManNAc-6-P.</text>
</comment>
<comment type="catalytic activity">
    <reaction evidence="1">
        <text>an N-acyl-D-mannosamine + ATP = an N-acyl-D-mannosamine 6-phosphate + ADP + H(+)</text>
        <dbReference type="Rhea" id="RHEA:23832"/>
        <dbReference type="ChEBI" id="CHEBI:15378"/>
        <dbReference type="ChEBI" id="CHEBI:16062"/>
        <dbReference type="ChEBI" id="CHEBI:30616"/>
        <dbReference type="ChEBI" id="CHEBI:57666"/>
        <dbReference type="ChEBI" id="CHEBI:456216"/>
        <dbReference type="EC" id="2.7.1.60"/>
    </reaction>
</comment>
<comment type="pathway">
    <text evidence="1">Amino-sugar metabolism; N-acetylneuraminate degradation; D-fructose 6-phosphate from N-acetylneuraminate: step 2/5.</text>
</comment>
<comment type="subunit">
    <text evidence="1">Homodimer.</text>
</comment>
<comment type="similarity">
    <text evidence="1">Belongs to the ROK (NagC/XylR) family. NanK subfamily.</text>
</comment>
<proteinExistence type="inferred from homology"/>
<name>NANK_SHIB3</name>
<sequence length="291" mass="29649">MTTLAIDIGGTKLAAALIGADGQIRDRRELPTPASQTPQALRDALAALVAPLQAHAQQVAIASTGIIRDGSLLALNPHNLGGLLHFPLVKTLEQLSNLPTIAINDAQAAAWAEYQALEGDITDMVFITVSTGVGGGVVSGGKLLTGPSGLAGHIGHTLADPHGPVCGCGRTGCVEAIASGRGIAAAAQGELMGADARTIFTRAGQGDEQAQQLIHRSAHVLARLIADIKATTDCQCVVVGGSVGLAEGYLALVKTYLAQEPAAFHVDLLAAHYRHDAGLLGAALLAQGEKL</sequence>